<feature type="chain" id="PRO_0000407851" description="Deoxyribodipyrimidine photo-lyase">
    <location>
        <begin position="1"/>
        <end position="496"/>
    </location>
</feature>
<feature type="domain" description="Photolyase/cryptochrome alpha/beta">
    <location>
        <begin position="28"/>
        <end position="160"/>
    </location>
</feature>
<feature type="binding site" evidence="1">
    <location>
        <position position="256"/>
    </location>
    <ligand>
        <name>FAD</name>
        <dbReference type="ChEBI" id="CHEBI:57692"/>
    </ligand>
</feature>
<feature type="binding site" evidence="1">
    <location>
        <begin position="269"/>
        <end position="273"/>
    </location>
    <ligand>
        <name>FAD</name>
        <dbReference type="ChEBI" id="CHEBI:57692"/>
    </ligand>
</feature>
<feature type="binding site" evidence="1">
    <location>
        <begin position="307"/>
        <end position="315"/>
    </location>
    <ligand>
        <name>FAD</name>
        <dbReference type="ChEBI" id="CHEBI:57692"/>
    </ligand>
</feature>
<feature type="binding site" evidence="2">
    <location>
        <position position="307"/>
    </location>
    <ligand>
        <name>DNA</name>
        <dbReference type="ChEBI" id="CHEBI:16991"/>
    </ligand>
</feature>
<feature type="binding site" evidence="1">
    <location>
        <begin position="415"/>
        <end position="417"/>
    </location>
    <ligand>
        <name>FAD</name>
        <dbReference type="ChEBI" id="CHEBI:57692"/>
    </ligand>
</feature>
<feature type="site" description="Electron transfer via tryptophanyl radical" evidence="2">
    <location>
        <position position="366"/>
    </location>
</feature>
<feature type="site" description="Electron transfer via tryptophanyl radical" evidence="2">
    <location>
        <position position="387"/>
    </location>
</feature>
<feature type="site" description="Electron transfer via tryptophanyl radical" evidence="2">
    <location>
        <position position="394"/>
    </location>
</feature>
<feature type="splice variant" id="VSP_040972" description="In isoform 2." evidence="10">
    <location>
        <begin position="365"/>
        <end position="370"/>
    </location>
</feature>
<feature type="sequence conflict" description="In Ref. 1; AAC08008 and 2; CAA67683." evidence="11" ref="1 2">
    <original>L</original>
    <variation>S</variation>
    <location>
        <position position="23"/>
    </location>
</feature>
<feature type="sequence conflict" description="In Ref. 1; AAC08008 and 2; CAA67683." evidence="11" ref="1 2">
    <original>T</original>
    <variation>I</variation>
    <location>
        <position position="303"/>
    </location>
</feature>
<feature type="sequence conflict" description="In Ref. 1; AAC08008 and 2; CAA67683." evidence="11" ref="1 2">
    <original>V</original>
    <variation>L</variation>
    <location>
        <position position="374"/>
    </location>
</feature>
<gene>
    <name type="primary">PHR1</name>
    <name type="synonym">UVR2</name>
    <name type="ordered locus">At1g12370</name>
    <name type="ORF">F5O11.9</name>
</gene>
<sequence>MASTVSVQPGRIRILKKGSWQPLDQTVGPVVYWMFRDQRLKDNWALIHAVDLANRTNAPVAVVFNLFDQFLDAKARQLGFMLKGLRQLHHQIDSLQIPFFLLQGDAKETIPNFLTECGASHLVTDFSPLREIRRCKDEVVKRTSDSLAIHEVDAHNVVPMWAASSKLEYSARTIRGKINKLLPDYLIEFPKLEPPKKKWTGMMDKKLVDWDSLIDKVVREGAEVPEIEWCVPGEDAGIEVLMGNKDGFLTKRLKNYSTDRNNPIKPKALSGLSPYLHFGQVSAQRCALEARKVRSTSPQAVDTFLEELIVRRELSDNFCYYQPHYDSLKGAWEWARKSLMDHASDKREHIYSLEQLEKGLTADPLWNASQLEMVYQGKMHGFMRMYWAKKILEWTKGPEEALSISIYLNNKYEIDGRDPSGYVGCMWSICGVHDQGWKERPVFGKIRYMNYAGCKRKFNVDSYISYVKSLVSVTKKKRKAEEQLTRDSVDPKITIV</sequence>
<reference key="1">
    <citation type="journal article" date="1997" name="Plant Cell">
        <title>An enzyme similar to animal type II photolyases mediates photoreactivation in Arabidopsis.</title>
        <authorList>
            <person name="Ahmad M."/>
            <person name="Jarillo J.A."/>
            <person name="Klimczak L.J."/>
            <person name="Landry L.G."/>
            <person name="Peng T."/>
            <person name="Last R.L."/>
            <person name="Cashmore A.R."/>
        </authorList>
    </citation>
    <scope>NUCLEOTIDE SEQUENCE [MRNA] (ISOFORM 1)</scope>
    <scope>FUNCTION</scope>
    <scope>TISSUE SPECIFICITY</scope>
    <scope>INDUCTION</scope>
    <scope>DISRUPTION PHENOTYPE</scope>
</reference>
<reference key="2">
    <citation type="submission" date="1996-09" db="EMBL/GenBank/DDBJ databases">
        <title>The cloning and sequence analysis of a putative type II CPD photolyases from Arabidopsis thaliana.</title>
        <authorList>
            <person name="Taylor R."/>
            <person name="Tobin A."/>
            <person name="Bray C."/>
        </authorList>
    </citation>
    <scope>NUCLEOTIDE SEQUENCE [MRNA] (ISOFORM 1)</scope>
</reference>
<reference key="3">
    <citation type="journal article" date="2000" name="Nature">
        <title>Sequence and analysis of chromosome 1 of the plant Arabidopsis thaliana.</title>
        <authorList>
            <person name="Theologis A."/>
            <person name="Ecker J.R."/>
            <person name="Palm C.J."/>
            <person name="Federspiel N.A."/>
            <person name="Kaul S."/>
            <person name="White O."/>
            <person name="Alonso J."/>
            <person name="Altafi H."/>
            <person name="Araujo R."/>
            <person name="Bowman C.L."/>
            <person name="Brooks S.Y."/>
            <person name="Buehler E."/>
            <person name="Chan A."/>
            <person name="Chao Q."/>
            <person name="Chen H."/>
            <person name="Cheuk R.F."/>
            <person name="Chin C.W."/>
            <person name="Chung M.K."/>
            <person name="Conn L."/>
            <person name="Conway A.B."/>
            <person name="Conway A.R."/>
            <person name="Creasy T.H."/>
            <person name="Dewar K."/>
            <person name="Dunn P."/>
            <person name="Etgu P."/>
            <person name="Feldblyum T.V."/>
            <person name="Feng J.-D."/>
            <person name="Fong B."/>
            <person name="Fujii C.Y."/>
            <person name="Gill J.E."/>
            <person name="Goldsmith A.D."/>
            <person name="Haas B."/>
            <person name="Hansen N.F."/>
            <person name="Hughes B."/>
            <person name="Huizar L."/>
            <person name="Hunter J.L."/>
            <person name="Jenkins J."/>
            <person name="Johnson-Hopson C."/>
            <person name="Khan S."/>
            <person name="Khaykin E."/>
            <person name="Kim C.J."/>
            <person name="Koo H.L."/>
            <person name="Kremenetskaia I."/>
            <person name="Kurtz D.B."/>
            <person name="Kwan A."/>
            <person name="Lam B."/>
            <person name="Langin-Hooper S."/>
            <person name="Lee A."/>
            <person name="Lee J.M."/>
            <person name="Lenz C.A."/>
            <person name="Li J.H."/>
            <person name="Li Y.-P."/>
            <person name="Lin X."/>
            <person name="Liu S.X."/>
            <person name="Liu Z.A."/>
            <person name="Luros J.S."/>
            <person name="Maiti R."/>
            <person name="Marziali A."/>
            <person name="Militscher J."/>
            <person name="Miranda M."/>
            <person name="Nguyen M."/>
            <person name="Nierman W.C."/>
            <person name="Osborne B.I."/>
            <person name="Pai G."/>
            <person name="Peterson J."/>
            <person name="Pham P.K."/>
            <person name="Rizzo M."/>
            <person name="Rooney T."/>
            <person name="Rowley D."/>
            <person name="Sakano H."/>
            <person name="Salzberg S.L."/>
            <person name="Schwartz J.R."/>
            <person name="Shinn P."/>
            <person name="Southwick A.M."/>
            <person name="Sun H."/>
            <person name="Tallon L.J."/>
            <person name="Tambunga G."/>
            <person name="Toriumi M.J."/>
            <person name="Town C.D."/>
            <person name="Utterback T."/>
            <person name="Van Aken S."/>
            <person name="Vaysberg M."/>
            <person name="Vysotskaia V.S."/>
            <person name="Walker M."/>
            <person name="Wu D."/>
            <person name="Yu G."/>
            <person name="Fraser C.M."/>
            <person name="Venter J.C."/>
            <person name="Davis R.W."/>
        </authorList>
    </citation>
    <scope>NUCLEOTIDE SEQUENCE [LARGE SCALE GENOMIC DNA]</scope>
    <source>
        <strain>cv. Columbia</strain>
    </source>
</reference>
<reference key="4">
    <citation type="journal article" date="2017" name="Plant J.">
        <title>Araport11: a complete reannotation of the Arabidopsis thaliana reference genome.</title>
        <authorList>
            <person name="Cheng C.Y."/>
            <person name="Krishnakumar V."/>
            <person name="Chan A.P."/>
            <person name="Thibaud-Nissen F."/>
            <person name="Schobel S."/>
            <person name="Town C.D."/>
        </authorList>
    </citation>
    <scope>GENOME REANNOTATION</scope>
    <source>
        <strain>cv. Columbia</strain>
    </source>
</reference>
<reference key="5">
    <citation type="journal article" date="2003" name="Science">
        <title>Empirical analysis of transcriptional activity in the Arabidopsis genome.</title>
        <authorList>
            <person name="Yamada K."/>
            <person name="Lim J."/>
            <person name="Dale J.M."/>
            <person name="Chen H."/>
            <person name="Shinn P."/>
            <person name="Palm C.J."/>
            <person name="Southwick A.M."/>
            <person name="Wu H.C."/>
            <person name="Kim C.J."/>
            <person name="Nguyen M."/>
            <person name="Pham P.K."/>
            <person name="Cheuk R.F."/>
            <person name="Karlin-Newmann G."/>
            <person name="Liu S.X."/>
            <person name="Lam B."/>
            <person name="Sakano H."/>
            <person name="Wu T."/>
            <person name="Yu G."/>
            <person name="Miranda M."/>
            <person name="Quach H.L."/>
            <person name="Tripp M."/>
            <person name="Chang C.H."/>
            <person name="Lee J.M."/>
            <person name="Toriumi M.J."/>
            <person name="Chan M.M."/>
            <person name="Tang C.C."/>
            <person name="Onodera C.S."/>
            <person name="Deng J.M."/>
            <person name="Akiyama K."/>
            <person name="Ansari Y."/>
            <person name="Arakawa T."/>
            <person name="Banh J."/>
            <person name="Banno F."/>
            <person name="Bowser L."/>
            <person name="Brooks S.Y."/>
            <person name="Carninci P."/>
            <person name="Chao Q."/>
            <person name="Choy N."/>
            <person name="Enju A."/>
            <person name="Goldsmith A.D."/>
            <person name="Gurjal M."/>
            <person name="Hansen N.F."/>
            <person name="Hayashizaki Y."/>
            <person name="Johnson-Hopson C."/>
            <person name="Hsuan V.W."/>
            <person name="Iida K."/>
            <person name="Karnes M."/>
            <person name="Khan S."/>
            <person name="Koesema E."/>
            <person name="Ishida J."/>
            <person name="Jiang P.X."/>
            <person name="Jones T."/>
            <person name="Kawai J."/>
            <person name="Kamiya A."/>
            <person name="Meyers C."/>
            <person name="Nakajima M."/>
            <person name="Narusaka M."/>
            <person name="Seki M."/>
            <person name="Sakurai T."/>
            <person name="Satou M."/>
            <person name="Tamse R."/>
            <person name="Vaysberg M."/>
            <person name="Wallender E.K."/>
            <person name="Wong C."/>
            <person name="Yamamura Y."/>
            <person name="Yuan S."/>
            <person name="Shinozaki K."/>
            <person name="Davis R.W."/>
            <person name="Theologis A."/>
            <person name="Ecker J.R."/>
        </authorList>
    </citation>
    <scope>NUCLEOTIDE SEQUENCE [LARGE SCALE MRNA] (ISOFORM 2)</scope>
    <source>
        <strain>cv. Columbia</strain>
    </source>
</reference>
<reference key="6">
    <citation type="journal article" date="1997" name="Proc. Natl. Acad. Sci. U.S.A.">
        <title>An Arabidopsis photolyase mutant is hypersensitive to ultraviolet-B radiation.</title>
        <authorList>
            <person name="Landry L.G."/>
            <person name="Stapleton A.E."/>
            <person name="Lim J."/>
            <person name="Hoffman P."/>
            <person name="Hays J.B."/>
            <person name="Walbot V."/>
            <person name="Last R.L."/>
        </authorList>
    </citation>
    <scope>FUNCTION</scope>
    <scope>DISRUPTION PHENOTYPE</scope>
</reference>
<reference key="7">
    <citation type="journal article" date="1997" name="Proc. Natl. Acad. Sci. U.S.A.">
        <title>Photorepair mutants of Arabidopsis.</title>
        <authorList>
            <person name="Jiang C.Z."/>
            <person name="Yee J."/>
            <person name="Mitchell D.L."/>
            <person name="Britt A.B."/>
        </authorList>
    </citation>
    <scope>FUNCTION</scope>
    <scope>DISRUPTION PHENOTYPE</scope>
</reference>
<reference key="8">
    <citation type="journal article" date="2000" name="Proc. Natl. Acad. Sci. U.S.A.">
        <title>UV-damage-mediated induction of homologous recombination in Arabidopsis is dependent on photosynthetically active radiation.</title>
        <authorList>
            <person name="Ries G."/>
            <person name="Buchholz G."/>
            <person name="Frohnmeyer H."/>
            <person name="Hohn B."/>
        </authorList>
    </citation>
    <scope>FUNCTION</scope>
    <scope>DISRUPTION PHENOTYPE</scope>
</reference>
<reference key="9">
    <citation type="journal article" date="2002" name="Plant Physiol.">
        <title>An ultraviolet-B-resistant mutant with enhanced DNA repair in Arabidopsis.</title>
        <authorList>
            <person name="Tanaka A."/>
            <person name="Sakamoto A."/>
            <person name="Ishigaki Y."/>
            <person name="Nikaido O."/>
            <person name="Sun G."/>
            <person name="Hase Y."/>
            <person name="Shikazono N."/>
            <person name="Tano S."/>
            <person name="Watanabe H."/>
        </authorList>
    </citation>
    <scope>INDUCTION</scope>
</reference>
<reference key="10">
    <citation type="journal article" date="2009" name="Planta">
        <title>Increased DNA repair in Arabidopsis plants overexpressing CPD photolyase.</title>
        <authorList>
            <person name="Kaiser G."/>
            <person name="Kleiner O."/>
            <person name="Beisswenger C."/>
            <person name="Batschauer A."/>
        </authorList>
    </citation>
    <scope>FUNCTION</scope>
    <scope>SUBCELLULAR LOCATION</scope>
</reference>
<reference key="11">
    <citation type="journal article" date="2010" name="DNA Repair">
        <title>Light-induced activation of class II cyclobutane pyrimidine dimer photolyases.</title>
        <authorList>
            <person name="Okafuji A."/>
            <person name="Biskup T."/>
            <person name="Hitomi K."/>
            <person name="Getzoff E.D."/>
            <person name="Kaiser G."/>
            <person name="Batschauer A."/>
            <person name="Bacher A."/>
            <person name="Hidema J."/>
            <person name="Teranishi M."/>
            <person name="Yamamoto K."/>
            <person name="Schleicher E."/>
            <person name="Weber S."/>
        </authorList>
    </citation>
    <scope>FUNCTION</scope>
    <scope>COFACTOR</scope>
</reference>
<evidence type="ECO:0000250" key="1"/>
<evidence type="ECO:0000255" key="2"/>
<evidence type="ECO:0000269" key="3">
    <source>
    </source>
</evidence>
<evidence type="ECO:0000269" key="4">
    <source>
    </source>
</evidence>
<evidence type="ECO:0000269" key="5">
    <source>
    </source>
</evidence>
<evidence type="ECO:0000269" key="6">
    <source>
    </source>
</evidence>
<evidence type="ECO:0000269" key="7">
    <source>
    </source>
</evidence>
<evidence type="ECO:0000269" key="8">
    <source>
    </source>
</evidence>
<evidence type="ECO:0000269" key="9">
    <source>
    </source>
</evidence>
<evidence type="ECO:0000303" key="10">
    <source>
    </source>
</evidence>
<evidence type="ECO:0000305" key="11"/>
<organism>
    <name type="scientific">Arabidopsis thaliana</name>
    <name type="common">Mouse-ear cress</name>
    <dbReference type="NCBI Taxonomy" id="3702"/>
    <lineage>
        <taxon>Eukaryota</taxon>
        <taxon>Viridiplantae</taxon>
        <taxon>Streptophyta</taxon>
        <taxon>Embryophyta</taxon>
        <taxon>Tracheophyta</taxon>
        <taxon>Spermatophyta</taxon>
        <taxon>Magnoliopsida</taxon>
        <taxon>eudicotyledons</taxon>
        <taxon>Gunneridae</taxon>
        <taxon>Pentapetalae</taxon>
        <taxon>rosids</taxon>
        <taxon>malvids</taxon>
        <taxon>Brassicales</taxon>
        <taxon>Brassicaceae</taxon>
        <taxon>Camelineae</taxon>
        <taxon>Arabidopsis</taxon>
    </lineage>
</organism>
<comment type="function">
    <text evidence="3 5 6 7 8 9">Involved in repair of UV radiation-induced DNA damage. Catalyzes the light-dependent monomerization (300-600 nm) of cyclobutylpyrimidine dimers (CPDs), which are formed between adjacent bases on the same DNA strand upon exposure to ultraviolet radiation. Required for plant survival in the presence of UV-B light. Not involved in the repair of (6-4) photoproducts.</text>
</comment>
<comment type="catalytic activity">
    <reaction>
        <text>cyclobutadipyrimidine (in DNA) = 2 pyrimidine residues (in DNA).</text>
        <dbReference type="EC" id="4.1.99.3"/>
    </reaction>
</comment>
<comment type="cofactor">
    <cofactor evidence="6">
        <name>FAD</name>
        <dbReference type="ChEBI" id="CHEBI:57692"/>
    </cofactor>
    <text evidence="6">Binds 1 FAD per subunit.</text>
</comment>
<comment type="subcellular location">
    <subcellularLocation>
        <location evidence="5">Nucleus</location>
    </subcellularLocation>
</comment>
<comment type="alternative products">
    <event type="alternative splicing"/>
    <isoform>
        <id>Q9SB00-1</id>
        <name>1</name>
        <sequence type="displayed"/>
    </isoform>
    <isoform>
        <id>Q9SB00-2</id>
        <name>2</name>
        <sequence type="described" ref="VSP_040972"/>
    </isoform>
</comment>
<comment type="tissue specificity">
    <text evidence="8">Highly expressed in flowers. Expressed in roots and stems.</text>
</comment>
<comment type="induction">
    <text evidence="4 8">By high-fluence white light, UV-A and UV-B.</text>
</comment>
<comment type="disruption phenotype">
    <text evidence="3 7 8 9">No visible phenotype under white light, but inhibition of growth and leaf necrosis under white light and UV-B. Increased accumulation of CPDs under UV-B.</text>
</comment>
<comment type="miscellaneous">
    <text>Over-expression of PHR1 decreases CPDs accumulation during UV-B treatment.</text>
</comment>
<comment type="similarity">
    <text evidence="11">Belongs to the DNA photolyase class-2 family.</text>
</comment>
<comment type="sequence caution" evidence="11">
    <conflict type="erroneous gene model prediction">
        <sequence resource="EMBL-CDS" id="AAF79657"/>
    </conflict>
</comment>
<name>PHR_ARATH</name>
<protein>
    <recommendedName>
        <fullName>Deoxyribodipyrimidine photo-lyase</fullName>
        <ecNumber>4.1.99.3</ecNumber>
    </recommendedName>
    <alternativeName>
        <fullName>AtCPDII</fullName>
    </alternativeName>
    <alternativeName>
        <fullName>DNA photolyase</fullName>
    </alternativeName>
    <alternativeName>
        <fullName>Photoreactivating enzyme 1</fullName>
    </alternativeName>
    <alternativeName>
        <fullName>Protein UV RESISTANCE 2</fullName>
    </alternativeName>
</protein>
<dbReference type="EC" id="4.1.99.3"/>
<dbReference type="EMBL" id="AF053365">
    <property type="protein sequence ID" value="AAC08008.1"/>
    <property type="molecule type" value="mRNA"/>
</dbReference>
<dbReference type="EMBL" id="X99301">
    <property type="protein sequence ID" value="CAA67683.1"/>
    <property type="molecule type" value="mRNA"/>
</dbReference>
<dbReference type="EMBL" id="AB010875">
    <property type="protein sequence ID" value="BAA74701.1"/>
    <property type="molecule type" value="Genomic_DNA"/>
</dbReference>
<dbReference type="EMBL" id="AC025416">
    <property type="protein sequence ID" value="AAF79657.1"/>
    <property type="status" value="ALT_SEQ"/>
    <property type="molecule type" value="Genomic_DNA"/>
</dbReference>
<dbReference type="EMBL" id="CP002684">
    <property type="protein sequence ID" value="AEE28871.1"/>
    <property type="molecule type" value="Genomic_DNA"/>
</dbReference>
<dbReference type="EMBL" id="CP002684">
    <property type="protein sequence ID" value="AEE28872.1"/>
    <property type="molecule type" value="Genomic_DNA"/>
</dbReference>
<dbReference type="EMBL" id="AY034961">
    <property type="protein sequence ID" value="AAK59467.1"/>
    <property type="molecule type" value="mRNA"/>
</dbReference>
<dbReference type="EMBL" id="AY113909">
    <property type="protein sequence ID" value="AAM44957.1"/>
    <property type="molecule type" value="mRNA"/>
</dbReference>
<dbReference type="PIR" id="T52112">
    <property type="entry name" value="T52112"/>
</dbReference>
<dbReference type="RefSeq" id="NP_563906.1">
    <molecule id="Q9SB00-2"/>
    <property type="nucleotide sequence ID" value="NM_101109.1"/>
</dbReference>
<dbReference type="RefSeq" id="NP_849651.1">
    <molecule id="Q9SB00-1"/>
    <property type="nucleotide sequence ID" value="NM_179320.2"/>
</dbReference>
<dbReference type="SMR" id="Q9SB00"/>
<dbReference type="FunCoup" id="Q9SB00">
    <property type="interactions" value="5"/>
</dbReference>
<dbReference type="STRING" id="3702.Q9SB00"/>
<dbReference type="PaxDb" id="3702-AT1G12370.2"/>
<dbReference type="ProteomicsDB" id="235082">
    <molecule id="Q9SB00-1"/>
</dbReference>
<dbReference type="EnsemblPlants" id="AT1G12370.1">
    <molecule id="Q9SB00-2"/>
    <property type="protein sequence ID" value="AT1G12370.1"/>
    <property type="gene ID" value="AT1G12370"/>
</dbReference>
<dbReference type="EnsemblPlants" id="AT1G12370.2">
    <molecule id="Q9SB00-1"/>
    <property type="protein sequence ID" value="AT1G12370.2"/>
    <property type="gene ID" value="AT1G12370"/>
</dbReference>
<dbReference type="GeneID" id="837792"/>
<dbReference type="Gramene" id="AT1G12370.1">
    <molecule id="Q9SB00-2"/>
    <property type="protein sequence ID" value="AT1G12370.1"/>
    <property type="gene ID" value="AT1G12370"/>
</dbReference>
<dbReference type="Gramene" id="AT1G12370.2">
    <molecule id="Q9SB00-1"/>
    <property type="protein sequence ID" value="AT1G12370.2"/>
    <property type="gene ID" value="AT1G12370"/>
</dbReference>
<dbReference type="KEGG" id="ath:AT1G12370"/>
<dbReference type="Araport" id="AT1G12370"/>
<dbReference type="TAIR" id="AT1G12370">
    <property type="gene designation" value="PHR1"/>
</dbReference>
<dbReference type="eggNOG" id="KOG0133">
    <property type="taxonomic scope" value="Eukaryota"/>
</dbReference>
<dbReference type="HOGENOM" id="CLU_026342_2_0_1"/>
<dbReference type="InParanoid" id="Q9SB00"/>
<dbReference type="OMA" id="IHNYLRM"/>
<dbReference type="OrthoDB" id="496749at2759"/>
<dbReference type="PhylomeDB" id="Q9SB00"/>
<dbReference type="BRENDA" id="4.1.99.3">
    <property type="organism ID" value="399"/>
</dbReference>
<dbReference type="PRO" id="PR:Q9SB00"/>
<dbReference type="Proteomes" id="UP000006548">
    <property type="component" value="Chromosome 1"/>
</dbReference>
<dbReference type="ExpressionAtlas" id="Q9SB00">
    <property type="expression patterns" value="baseline and differential"/>
</dbReference>
<dbReference type="GO" id="GO:0005634">
    <property type="term" value="C:nucleus"/>
    <property type="evidence" value="ECO:0007669"/>
    <property type="project" value="UniProtKB-SubCell"/>
</dbReference>
<dbReference type="GO" id="GO:0003904">
    <property type="term" value="F:deoxyribodipyrimidine photo-lyase activity"/>
    <property type="evidence" value="ECO:0007669"/>
    <property type="project" value="UniProtKB-EC"/>
</dbReference>
<dbReference type="GO" id="GO:0003677">
    <property type="term" value="F:DNA binding"/>
    <property type="evidence" value="ECO:0007669"/>
    <property type="project" value="UniProtKB-KW"/>
</dbReference>
<dbReference type="GO" id="GO:0003913">
    <property type="term" value="F:DNA photolyase activity"/>
    <property type="evidence" value="ECO:0000314"/>
    <property type="project" value="TAIR"/>
</dbReference>
<dbReference type="GO" id="GO:0071949">
    <property type="term" value="F:FAD binding"/>
    <property type="evidence" value="ECO:0007669"/>
    <property type="project" value="EnsemblPlants"/>
</dbReference>
<dbReference type="GO" id="GO:0000719">
    <property type="term" value="P:photoreactive repair"/>
    <property type="evidence" value="ECO:0000315"/>
    <property type="project" value="TAIR"/>
</dbReference>
<dbReference type="GO" id="GO:0009650">
    <property type="term" value="P:UV protection"/>
    <property type="evidence" value="ECO:0000315"/>
    <property type="project" value="TAIR"/>
</dbReference>
<dbReference type="FunFam" id="1.10.579.10:FF:000002">
    <property type="entry name" value="Deoxyribodipyrimidine photolyase"/>
    <property type="match status" value="1"/>
</dbReference>
<dbReference type="FunFam" id="1.25.40.80:FF:000004">
    <property type="entry name" value="Deoxyribodipyrimidine photolyase"/>
    <property type="match status" value="1"/>
</dbReference>
<dbReference type="FunFam" id="3.40.50.620:FF:000110">
    <property type="entry name" value="Deoxyribodipyrimidine photolyase"/>
    <property type="match status" value="1"/>
</dbReference>
<dbReference type="Gene3D" id="1.25.40.80">
    <property type="match status" value="1"/>
</dbReference>
<dbReference type="Gene3D" id="1.10.579.10">
    <property type="entry name" value="DNA Cyclobutane Dipyrimidine Photolyase, subunit A, domain 3"/>
    <property type="match status" value="1"/>
</dbReference>
<dbReference type="Gene3D" id="3.40.50.620">
    <property type="entry name" value="HUPs"/>
    <property type="match status" value="1"/>
</dbReference>
<dbReference type="InterPro" id="IPR036134">
    <property type="entry name" value="Crypto/Photolyase_FAD-like_sf"/>
</dbReference>
<dbReference type="InterPro" id="IPR036155">
    <property type="entry name" value="Crypto/Photolyase_N_sf"/>
</dbReference>
<dbReference type="InterPro" id="IPR008148">
    <property type="entry name" value="DNA_photolyase_2"/>
</dbReference>
<dbReference type="InterPro" id="IPR032673">
    <property type="entry name" value="DNA_photolyase_2_CS"/>
</dbReference>
<dbReference type="InterPro" id="IPR006050">
    <property type="entry name" value="DNA_photolyase_N"/>
</dbReference>
<dbReference type="InterPro" id="IPR052219">
    <property type="entry name" value="Photolyase_Class-2"/>
</dbReference>
<dbReference type="InterPro" id="IPR014729">
    <property type="entry name" value="Rossmann-like_a/b/a_fold"/>
</dbReference>
<dbReference type="NCBIfam" id="TIGR00591">
    <property type="entry name" value="phr2"/>
    <property type="match status" value="1"/>
</dbReference>
<dbReference type="PANTHER" id="PTHR10211:SF0">
    <property type="entry name" value="DEOXYRIBODIPYRIMIDINE PHOTO-LYASE"/>
    <property type="match status" value="1"/>
</dbReference>
<dbReference type="PANTHER" id="PTHR10211">
    <property type="entry name" value="DEOXYRIBODIPYRIMIDINE PHOTOLYASE"/>
    <property type="match status" value="1"/>
</dbReference>
<dbReference type="Pfam" id="PF00875">
    <property type="entry name" value="DNA_photolyase"/>
    <property type="match status" value="1"/>
</dbReference>
<dbReference type="SUPFAM" id="SSF48173">
    <property type="entry name" value="Cryptochrome/photolyase FAD-binding domain"/>
    <property type="match status" value="1"/>
</dbReference>
<dbReference type="SUPFAM" id="SSF52425">
    <property type="entry name" value="Cryptochrome/photolyase, N-terminal domain"/>
    <property type="match status" value="1"/>
</dbReference>
<dbReference type="PROSITE" id="PS01083">
    <property type="entry name" value="DNA_PHOTOLYASES_2_1"/>
    <property type="match status" value="1"/>
</dbReference>
<dbReference type="PROSITE" id="PS01084">
    <property type="entry name" value="DNA_PHOTOLYASES_2_2"/>
    <property type="match status" value="1"/>
</dbReference>
<dbReference type="PROSITE" id="PS51645">
    <property type="entry name" value="PHR_CRY_ALPHA_BETA"/>
    <property type="match status" value="1"/>
</dbReference>
<accession>Q9SB00</accession>
<accession>O24374</accession>
<accession>Q94CC5</accession>
<accession>Q9LNA9</accession>
<keyword id="KW-0025">Alternative splicing</keyword>
<keyword id="KW-0227">DNA damage</keyword>
<keyword id="KW-0234">DNA repair</keyword>
<keyword id="KW-0238">DNA-binding</keyword>
<keyword id="KW-0274">FAD</keyword>
<keyword id="KW-0285">Flavoprotein</keyword>
<keyword id="KW-0456">Lyase</keyword>
<keyword id="KW-0547">Nucleotide-binding</keyword>
<keyword id="KW-0539">Nucleus</keyword>
<keyword id="KW-1185">Reference proteome</keyword>
<proteinExistence type="evidence at transcript level"/>